<proteinExistence type="evidence at protein level"/>
<reference key="1">
    <citation type="journal article" date="2005" name="Nature">
        <title>Generation and annotation of the DNA sequences of human chromosomes 2 and 4.</title>
        <authorList>
            <person name="Hillier L.W."/>
            <person name="Graves T.A."/>
            <person name="Fulton R.S."/>
            <person name="Fulton L.A."/>
            <person name="Pepin K.H."/>
            <person name="Minx P."/>
            <person name="Wagner-McPherson C."/>
            <person name="Layman D."/>
            <person name="Wylie K."/>
            <person name="Sekhon M."/>
            <person name="Becker M.C."/>
            <person name="Fewell G.A."/>
            <person name="Delehaunty K.D."/>
            <person name="Miner T.L."/>
            <person name="Nash W.E."/>
            <person name="Kremitzki C."/>
            <person name="Oddy L."/>
            <person name="Du H."/>
            <person name="Sun H."/>
            <person name="Bradshaw-Cordum H."/>
            <person name="Ali J."/>
            <person name="Carter J."/>
            <person name="Cordes M."/>
            <person name="Harris A."/>
            <person name="Isak A."/>
            <person name="van Brunt A."/>
            <person name="Nguyen C."/>
            <person name="Du F."/>
            <person name="Courtney L."/>
            <person name="Kalicki J."/>
            <person name="Ozersky P."/>
            <person name="Abbott S."/>
            <person name="Armstrong J."/>
            <person name="Belter E.A."/>
            <person name="Caruso L."/>
            <person name="Cedroni M."/>
            <person name="Cotton M."/>
            <person name="Davidson T."/>
            <person name="Desai A."/>
            <person name="Elliott G."/>
            <person name="Erb T."/>
            <person name="Fronick C."/>
            <person name="Gaige T."/>
            <person name="Haakenson W."/>
            <person name="Haglund K."/>
            <person name="Holmes A."/>
            <person name="Harkins R."/>
            <person name="Kim K."/>
            <person name="Kruchowski S.S."/>
            <person name="Strong C.M."/>
            <person name="Grewal N."/>
            <person name="Goyea E."/>
            <person name="Hou S."/>
            <person name="Levy A."/>
            <person name="Martinka S."/>
            <person name="Mead K."/>
            <person name="McLellan M.D."/>
            <person name="Meyer R."/>
            <person name="Randall-Maher J."/>
            <person name="Tomlinson C."/>
            <person name="Dauphin-Kohlberg S."/>
            <person name="Kozlowicz-Reilly A."/>
            <person name="Shah N."/>
            <person name="Swearengen-Shahid S."/>
            <person name="Snider J."/>
            <person name="Strong J.T."/>
            <person name="Thompson J."/>
            <person name="Yoakum M."/>
            <person name="Leonard S."/>
            <person name="Pearman C."/>
            <person name="Trani L."/>
            <person name="Radionenko M."/>
            <person name="Waligorski J.E."/>
            <person name="Wang C."/>
            <person name="Rock S.M."/>
            <person name="Tin-Wollam A.-M."/>
            <person name="Maupin R."/>
            <person name="Latreille P."/>
            <person name="Wendl M.C."/>
            <person name="Yang S.-P."/>
            <person name="Pohl C."/>
            <person name="Wallis J.W."/>
            <person name="Spieth J."/>
            <person name="Bieri T.A."/>
            <person name="Berkowicz N."/>
            <person name="Nelson J.O."/>
            <person name="Osborne J."/>
            <person name="Ding L."/>
            <person name="Meyer R."/>
            <person name="Sabo A."/>
            <person name="Shotland Y."/>
            <person name="Sinha P."/>
            <person name="Wohldmann P.E."/>
            <person name="Cook L.L."/>
            <person name="Hickenbotham M.T."/>
            <person name="Eldred J."/>
            <person name="Williams D."/>
            <person name="Jones T.A."/>
            <person name="She X."/>
            <person name="Ciccarelli F.D."/>
            <person name="Izaurralde E."/>
            <person name="Taylor J."/>
            <person name="Schmutz J."/>
            <person name="Myers R.M."/>
            <person name="Cox D.R."/>
            <person name="Huang X."/>
            <person name="McPherson J.D."/>
            <person name="Mardis E.R."/>
            <person name="Clifton S.W."/>
            <person name="Warren W.C."/>
            <person name="Chinwalla A.T."/>
            <person name="Eddy S.R."/>
            <person name="Marra M.A."/>
            <person name="Ovcharenko I."/>
            <person name="Furey T.S."/>
            <person name="Miller W."/>
            <person name="Eichler E.E."/>
            <person name="Bork P."/>
            <person name="Suyama M."/>
            <person name="Torrents D."/>
            <person name="Waterston R.H."/>
            <person name="Wilson R.K."/>
        </authorList>
    </citation>
    <scope>NUCLEOTIDE SEQUENCE [LARGE SCALE GENOMIC DNA]</scope>
</reference>
<reference key="2">
    <citation type="journal article" date="2004" name="Genome Res.">
        <title>The status, quality, and expansion of the NIH full-length cDNA project: the Mammalian Gene Collection (MGC).</title>
        <authorList>
            <consortium name="The MGC Project Team"/>
        </authorList>
    </citation>
    <scope>NUCLEOTIDE SEQUENCE [LARGE SCALE MRNA] (ISOFORM 3)</scope>
    <scope>NUCLEOTIDE SEQUENCE [LARGE SCALE MRNA] OF 181-580 (ISOFORM 2)</scope>
    <scope>NUCLEOTIDE SEQUENCE [LARGE SCALE MRNA] OF 430-580 (ISOFORM 4)</scope>
    <source>
        <tissue>Brain</tissue>
    </source>
</reference>
<reference key="3">
    <citation type="journal article" date="2004" name="Nat. Genet.">
        <title>Complete sequencing and characterization of 21,243 full-length human cDNAs.</title>
        <authorList>
            <person name="Ota T."/>
            <person name="Suzuki Y."/>
            <person name="Nishikawa T."/>
            <person name="Otsuki T."/>
            <person name="Sugiyama T."/>
            <person name="Irie R."/>
            <person name="Wakamatsu A."/>
            <person name="Hayashi K."/>
            <person name="Sato H."/>
            <person name="Nagai K."/>
            <person name="Kimura K."/>
            <person name="Makita H."/>
            <person name="Sekine M."/>
            <person name="Obayashi M."/>
            <person name="Nishi T."/>
            <person name="Shibahara T."/>
            <person name="Tanaka T."/>
            <person name="Ishii S."/>
            <person name="Yamamoto J."/>
            <person name="Saito K."/>
            <person name="Kawai Y."/>
            <person name="Isono Y."/>
            <person name="Nakamura Y."/>
            <person name="Nagahari K."/>
            <person name="Murakami K."/>
            <person name="Yasuda T."/>
            <person name="Iwayanagi T."/>
            <person name="Wagatsuma M."/>
            <person name="Shiratori A."/>
            <person name="Sudo H."/>
            <person name="Hosoiri T."/>
            <person name="Kaku Y."/>
            <person name="Kodaira H."/>
            <person name="Kondo H."/>
            <person name="Sugawara M."/>
            <person name="Takahashi M."/>
            <person name="Kanda K."/>
            <person name="Yokoi T."/>
            <person name="Furuya T."/>
            <person name="Kikkawa E."/>
            <person name="Omura Y."/>
            <person name="Abe K."/>
            <person name="Kamihara K."/>
            <person name="Katsuta N."/>
            <person name="Sato K."/>
            <person name="Tanikawa M."/>
            <person name="Yamazaki M."/>
            <person name="Ninomiya K."/>
            <person name="Ishibashi T."/>
            <person name="Yamashita H."/>
            <person name="Murakawa K."/>
            <person name="Fujimori K."/>
            <person name="Tanai H."/>
            <person name="Kimata M."/>
            <person name="Watanabe M."/>
            <person name="Hiraoka S."/>
            <person name="Chiba Y."/>
            <person name="Ishida S."/>
            <person name="Ono Y."/>
            <person name="Takiguchi S."/>
            <person name="Watanabe S."/>
            <person name="Yosida M."/>
            <person name="Hotuta T."/>
            <person name="Kusano J."/>
            <person name="Kanehori K."/>
            <person name="Takahashi-Fujii A."/>
            <person name="Hara H."/>
            <person name="Tanase T.-O."/>
            <person name="Nomura Y."/>
            <person name="Togiya S."/>
            <person name="Komai F."/>
            <person name="Hara R."/>
            <person name="Takeuchi K."/>
            <person name="Arita M."/>
            <person name="Imose N."/>
            <person name="Musashino K."/>
            <person name="Yuuki H."/>
            <person name="Oshima A."/>
            <person name="Sasaki N."/>
            <person name="Aotsuka S."/>
            <person name="Yoshikawa Y."/>
            <person name="Matsunawa H."/>
            <person name="Ichihara T."/>
            <person name="Shiohata N."/>
            <person name="Sano S."/>
            <person name="Moriya S."/>
            <person name="Momiyama H."/>
            <person name="Satoh N."/>
            <person name="Takami S."/>
            <person name="Terashima Y."/>
            <person name="Suzuki O."/>
            <person name="Nakagawa S."/>
            <person name="Senoh A."/>
            <person name="Mizoguchi H."/>
            <person name="Goto Y."/>
            <person name="Shimizu F."/>
            <person name="Wakebe H."/>
            <person name="Hishigaki H."/>
            <person name="Watanabe T."/>
            <person name="Sugiyama A."/>
            <person name="Takemoto M."/>
            <person name="Kawakami B."/>
            <person name="Yamazaki M."/>
            <person name="Watanabe K."/>
            <person name="Kumagai A."/>
            <person name="Itakura S."/>
            <person name="Fukuzumi Y."/>
            <person name="Fujimori Y."/>
            <person name="Komiyama M."/>
            <person name="Tashiro H."/>
            <person name="Tanigami A."/>
            <person name="Fujiwara T."/>
            <person name="Ono T."/>
            <person name="Yamada K."/>
            <person name="Fujii Y."/>
            <person name="Ozaki K."/>
            <person name="Hirao M."/>
            <person name="Ohmori Y."/>
            <person name="Kawabata A."/>
            <person name="Hikiji T."/>
            <person name="Kobatake N."/>
            <person name="Inagaki H."/>
            <person name="Ikema Y."/>
            <person name="Okamoto S."/>
            <person name="Okitani R."/>
            <person name="Kawakami T."/>
            <person name="Noguchi S."/>
            <person name="Itoh T."/>
            <person name="Shigeta K."/>
            <person name="Senba T."/>
            <person name="Matsumura K."/>
            <person name="Nakajima Y."/>
            <person name="Mizuno T."/>
            <person name="Morinaga M."/>
            <person name="Sasaki M."/>
            <person name="Togashi T."/>
            <person name="Oyama M."/>
            <person name="Hata H."/>
            <person name="Watanabe M."/>
            <person name="Komatsu T."/>
            <person name="Mizushima-Sugano J."/>
            <person name="Satoh T."/>
            <person name="Shirai Y."/>
            <person name="Takahashi Y."/>
            <person name="Nakagawa K."/>
            <person name="Okumura K."/>
            <person name="Nagase T."/>
            <person name="Nomura N."/>
            <person name="Kikuchi H."/>
            <person name="Masuho Y."/>
            <person name="Yamashita R."/>
            <person name="Nakai K."/>
            <person name="Yada T."/>
            <person name="Nakamura Y."/>
            <person name="Ohara O."/>
            <person name="Isogai T."/>
            <person name="Sugano S."/>
        </authorList>
    </citation>
    <scope>NUCLEOTIDE SEQUENCE [LARGE SCALE MRNA] OF 172-580 (ISOFORM 1)</scope>
    <source>
        <tissue>Teratocarcinoma</tissue>
    </source>
</reference>
<reference key="4">
    <citation type="journal article" date="2013" name="J. Proteome Res.">
        <title>Toward a comprehensive characterization of a human cancer cell phosphoproteome.</title>
        <authorList>
            <person name="Zhou H."/>
            <person name="Di Palma S."/>
            <person name="Preisinger C."/>
            <person name="Peng M."/>
            <person name="Polat A.N."/>
            <person name="Heck A.J."/>
            <person name="Mohammed S."/>
        </authorList>
    </citation>
    <scope>PHOSPHORYLATION [LARGE SCALE ANALYSIS] AT SER-180</scope>
    <scope>IDENTIFICATION BY MASS SPECTROMETRY [LARGE SCALE ANALYSIS]</scope>
    <source>
        <tissue>Cervix carcinoma</tissue>
        <tissue>Erythroleukemia</tissue>
    </source>
</reference>
<reference key="5">
    <citation type="journal article" date="2017" name="Nat. Struct. Mol. Biol.">
        <title>Site-specific mapping of the human SUMO proteome reveals co-modification with phosphorylation.</title>
        <authorList>
            <person name="Hendriks I.A."/>
            <person name="Lyon D."/>
            <person name="Young C."/>
            <person name="Jensen L.J."/>
            <person name="Vertegaal A.C."/>
            <person name="Nielsen M.L."/>
        </authorList>
    </citation>
    <scope>SUMOYLATION [LARGE SCALE ANALYSIS] AT LYS-169 AND LYS-292</scope>
    <scope>IDENTIFICATION BY MASS SPECTROMETRY [LARGE SCALE ANALYSIS]</scope>
</reference>
<protein>
    <recommendedName>
        <fullName>Nuclear body protein SP140-like protein</fullName>
    </recommendedName>
</protein>
<organism>
    <name type="scientific">Homo sapiens</name>
    <name type="common">Human</name>
    <dbReference type="NCBI Taxonomy" id="9606"/>
    <lineage>
        <taxon>Eukaryota</taxon>
        <taxon>Metazoa</taxon>
        <taxon>Chordata</taxon>
        <taxon>Craniata</taxon>
        <taxon>Vertebrata</taxon>
        <taxon>Euteleostomi</taxon>
        <taxon>Mammalia</taxon>
        <taxon>Eutheria</taxon>
        <taxon>Euarchontoglires</taxon>
        <taxon>Primates</taxon>
        <taxon>Haplorrhini</taxon>
        <taxon>Catarrhini</taxon>
        <taxon>Hominidae</taxon>
        <taxon>Homo</taxon>
    </lineage>
</organism>
<evidence type="ECO:0000255" key="1">
    <source>
        <dbReference type="PROSITE-ProRule" id="PRU00035"/>
    </source>
</evidence>
<evidence type="ECO:0000255" key="2">
    <source>
        <dbReference type="PROSITE-ProRule" id="PRU00146"/>
    </source>
</evidence>
<evidence type="ECO:0000255" key="3">
    <source>
        <dbReference type="PROSITE-ProRule" id="PRU00185"/>
    </source>
</evidence>
<evidence type="ECO:0000255" key="4">
    <source>
        <dbReference type="PROSITE-ProRule" id="PRU00747"/>
    </source>
</evidence>
<evidence type="ECO:0000256" key="5">
    <source>
        <dbReference type="SAM" id="MobiDB-lite"/>
    </source>
</evidence>
<evidence type="ECO:0000303" key="6">
    <source>
    </source>
</evidence>
<evidence type="ECO:0000303" key="7">
    <source>
    </source>
</evidence>
<evidence type="ECO:0000305" key="8"/>
<evidence type="ECO:0007744" key="9">
    <source>
    </source>
</evidence>
<evidence type="ECO:0007744" key="10">
    <source>
    </source>
</evidence>
<keyword id="KW-0025">Alternative splicing</keyword>
<keyword id="KW-0103">Bromodomain</keyword>
<keyword id="KW-0238">DNA-binding</keyword>
<keyword id="KW-1017">Isopeptide bond</keyword>
<keyword id="KW-0479">Metal-binding</keyword>
<keyword id="KW-0597">Phosphoprotein</keyword>
<keyword id="KW-1267">Proteomics identification</keyword>
<keyword id="KW-1185">Reference proteome</keyword>
<keyword id="KW-0832">Ubl conjugation</keyword>
<keyword id="KW-0862">Zinc</keyword>
<keyword id="KW-0863">Zinc-finger</keyword>
<gene>
    <name type="primary">SP140L</name>
</gene>
<sequence length="580" mass="67005">MAGGGSDLSTRGLNGGVSQVANEMNHLPAHSQSLQRLFTEDQDVDEGLVYDTVFKHFKRHKLEISNAIKKTFPFLEGLRDRELITNKMFEDSEDSCRNLVPVQRVVYNVLSELEKTFNLSVLEALFSEVNMQEYPDLIHIYKSFKNAIQDKLSFQESDRKEREERPDIKLSLKQGEVPESPEARKESDQACGKMDTVDIANNSTLGKPKRKRRKKKGHGWSRMGTRTQKNNQQNDNSKADGQLVSSEKKANMNLKDLSKIRGRKRGKPGTHFTQSDRAPQKRVRSRASRKHKDETVDFQAPLLPVTCGGVKGILHKEKLEQGTLAKCIQTEDGKWFTPMEFEIKGGYARSKNWRLSVRCGGWPLRRLMEEGSLPNPPRIYYRNKKRILKSQNNSSVDPCMRNLDECEVCRDGGELFCCDTCSRVFHEDCHIPPVESEKTPWNCIFCRMKESPGSQQCCQESEVLERQMCPEEQLKCEFLLLKVYCCSESSFFAKIPYYYYIREACQGLKEPMWLDKIKKRLNEHGYPQVEGFVQDMRLIFQNHRASYKYKDFGQMGLRLEAEFEKDFKEVFAIQETNGNS</sequence>
<accession>Q9H930</accession>
<accession>Q2M375</accession>
<accession>Q4ZG65</accession>
<accession>Q9BSP3</accession>
<comment type="alternative products">
    <event type="alternative splicing"/>
    <isoform>
        <id>Q9H930-4</id>
        <name>4</name>
        <sequence type="displayed"/>
    </isoform>
    <isoform>
        <id>Q9H930-1</id>
        <name>1</name>
        <sequence type="described" ref="VSP_040889"/>
    </isoform>
    <isoform>
        <id>Q9H930-2</id>
        <name>2</name>
        <sequence type="described" ref="VSP_031833"/>
    </isoform>
    <isoform>
        <id>Q9H930-3</id>
        <name>3</name>
        <sequence type="described" ref="VSP_031830 VSP_031831 VSP_031832"/>
    </isoform>
</comment>
<comment type="sequence caution" evidence="8">
    <conflict type="erroneous gene model prediction">
        <sequence resource="EMBL-CDS" id="AAX88869"/>
    </conflict>
</comment>
<comment type="sequence caution" evidence="8">
    <conflict type="erroneous initiation">
        <sequence resource="EMBL-CDS" id="BAB14413"/>
    </conflict>
    <text>Truncated N-terminus.</text>
</comment>
<dbReference type="EMBL" id="AC009949">
    <property type="protein sequence ID" value="AAX88869.1"/>
    <property type="status" value="ALT_SEQ"/>
    <property type="molecule type" value="Genomic_DNA"/>
</dbReference>
<dbReference type="EMBL" id="BC004921">
    <property type="protein sequence ID" value="AAH04921.1"/>
    <property type="molecule type" value="mRNA"/>
</dbReference>
<dbReference type="EMBL" id="BC105007">
    <property type="status" value="NOT_ANNOTATED_CDS"/>
    <property type="molecule type" value="mRNA"/>
</dbReference>
<dbReference type="EMBL" id="BQ690359">
    <property type="status" value="NOT_ANNOTATED_CDS"/>
    <property type="molecule type" value="mRNA"/>
</dbReference>
<dbReference type="EMBL" id="AK023116">
    <property type="protein sequence ID" value="BAB14413.1"/>
    <property type="status" value="ALT_INIT"/>
    <property type="molecule type" value="mRNA"/>
</dbReference>
<dbReference type="CCDS" id="CCDS46538.1">
    <molecule id="Q9H930-4"/>
</dbReference>
<dbReference type="RefSeq" id="NP_001339822.1">
    <molecule id="Q9H930-2"/>
    <property type="nucleotide sequence ID" value="NM_001352893.2"/>
</dbReference>
<dbReference type="RefSeq" id="NP_612411.4">
    <molecule id="Q9H930-4"/>
    <property type="nucleotide sequence ID" value="NM_138402.4"/>
</dbReference>
<dbReference type="RefSeq" id="XP_006712918.1">
    <property type="nucleotide sequence ID" value="XM_006712855.2"/>
</dbReference>
<dbReference type="SMR" id="Q9H930"/>
<dbReference type="BioGRID" id="125019">
    <property type="interactions" value="11"/>
</dbReference>
<dbReference type="FunCoup" id="Q9H930">
    <property type="interactions" value="549"/>
</dbReference>
<dbReference type="IntAct" id="Q9H930">
    <property type="interactions" value="7"/>
</dbReference>
<dbReference type="STRING" id="9606.ENSP00000397911"/>
<dbReference type="ChEMBL" id="CHEMBL4105997"/>
<dbReference type="GlyGen" id="Q9H930">
    <property type="glycosylation" value="1 site, 1 O-linked glycan (1 site)"/>
</dbReference>
<dbReference type="iPTMnet" id="Q9H930"/>
<dbReference type="PhosphoSitePlus" id="Q9H930"/>
<dbReference type="BioMuta" id="SP140L"/>
<dbReference type="DMDM" id="378405242"/>
<dbReference type="jPOST" id="Q9H930"/>
<dbReference type="MassIVE" id="Q9H930"/>
<dbReference type="PaxDb" id="9606-ENSP00000397911"/>
<dbReference type="PeptideAtlas" id="Q9H930"/>
<dbReference type="ProteomicsDB" id="81273">
    <molecule id="Q9H930-4"/>
</dbReference>
<dbReference type="ProteomicsDB" id="81274">
    <molecule id="Q9H930-1"/>
</dbReference>
<dbReference type="ProteomicsDB" id="81275">
    <molecule id="Q9H930-2"/>
</dbReference>
<dbReference type="ProteomicsDB" id="81276">
    <molecule id="Q9H930-3"/>
</dbReference>
<dbReference type="Antibodypedia" id="34404">
    <property type="antibodies" value="77 antibodies from 17 providers"/>
</dbReference>
<dbReference type="DNASU" id="93349"/>
<dbReference type="Ensembl" id="ENST00000415673.7">
    <molecule id="Q9H930-4"/>
    <property type="protein sequence ID" value="ENSP00000397911.2"/>
    <property type="gene ID" value="ENSG00000185404.17"/>
</dbReference>
<dbReference type="Ensembl" id="ENST00000444636.5">
    <molecule id="Q9H930-1"/>
    <property type="protein sequence ID" value="ENSP00000395195.1"/>
    <property type="gene ID" value="ENSG00000185404.17"/>
</dbReference>
<dbReference type="Ensembl" id="ENST00000458341.1">
    <molecule id="Q9H930-3"/>
    <property type="protein sequence ID" value="ENSP00000395223.1"/>
    <property type="gene ID" value="ENSG00000185404.17"/>
</dbReference>
<dbReference type="GeneID" id="93349"/>
<dbReference type="KEGG" id="hsa:93349"/>
<dbReference type="MANE-Select" id="ENST00000415673.7">
    <property type="protein sequence ID" value="ENSP00000397911.2"/>
    <property type="RefSeq nucleotide sequence ID" value="NM_138402.6"/>
    <property type="RefSeq protein sequence ID" value="NP_612411.4"/>
</dbReference>
<dbReference type="UCSC" id="uc010fxm.2">
    <molecule id="Q9H930-4"/>
    <property type="organism name" value="human"/>
</dbReference>
<dbReference type="AGR" id="HGNC:25105"/>
<dbReference type="CTD" id="93349"/>
<dbReference type="DisGeNET" id="93349"/>
<dbReference type="GeneCards" id="SP140L"/>
<dbReference type="HGNC" id="HGNC:25105">
    <property type="gene designation" value="SP140L"/>
</dbReference>
<dbReference type="HPA" id="ENSG00000185404">
    <property type="expression patterns" value="Low tissue specificity"/>
</dbReference>
<dbReference type="MIM" id="617747">
    <property type="type" value="gene"/>
</dbReference>
<dbReference type="neXtProt" id="NX_Q9H930"/>
<dbReference type="OpenTargets" id="ENSG00000185404"/>
<dbReference type="PharmGKB" id="PA164726206"/>
<dbReference type="VEuPathDB" id="HostDB:ENSG00000185404"/>
<dbReference type="eggNOG" id="KOG2177">
    <property type="taxonomic scope" value="Eukaryota"/>
</dbReference>
<dbReference type="GeneTree" id="ENSGT00940000164523"/>
<dbReference type="HOGENOM" id="CLU_015844_3_1_1"/>
<dbReference type="InParanoid" id="Q9H930"/>
<dbReference type="OMA" id="CMENPQT"/>
<dbReference type="OrthoDB" id="1870062at2759"/>
<dbReference type="PAN-GO" id="Q9H930">
    <property type="GO annotations" value="3 GO annotations based on evolutionary models"/>
</dbReference>
<dbReference type="PhylomeDB" id="Q9H930"/>
<dbReference type="TreeFam" id="TF335091"/>
<dbReference type="PathwayCommons" id="Q9H930"/>
<dbReference type="SignaLink" id="Q9H930"/>
<dbReference type="BioGRID-ORCS" id="93349">
    <property type="hits" value="12 hits in 1169 CRISPR screens"/>
</dbReference>
<dbReference type="GenomeRNAi" id="93349"/>
<dbReference type="Pharos" id="Q9H930">
    <property type="development level" value="Tdark"/>
</dbReference>
<dbReference type="PRO" id="PR:Q9H930"/>
<dbReference type="Proteomes" id="UP000005640">
    <property type="component" value="Chromosome 2"/>
</dbReference>
<dbReference type="RNAct" id="Q9H930">
    <property type="molecule type" value="protein"/>
</dbReference>
<dbReference type="Bgee" id="ENSG00000185404">
    <property type="expression patterns" value="Expressed in granulocyte and 162 other cell types or tissues"/>
</dbReference>
<dbReference type="ExpressionAtlas" id="Q9H930">
    <property type="expression patterns" value="baseline and differential"/>
</dbReference>
<dbReference type="GO" id="GO:0005634">
    <property type="term" value="C:nucleus"/>
    <property type="evidence" value="ECO:0000318"/>
    <property type="project" value="GO_Central"/>
</dbReference>
<dbReference type="GO" id="GO:0003677">
    <property type="term" value="F:DNA binding"/>
    <property type="evidence" value="ECO:0007669"/>
    <property type="project" value="UniProtKB-KW"/>
</dbReference>
<dbReference type="GO" id="GO:0000981">
    <property type="term" value="F:DNA-binding transcription factor activity, RNA polymerase II-specific"/>
    <property type="evidence" value="ECO:0000318"/>
    <property type="project" value="GO_Central"/>
</dbReference>
<dbReference type="GO" id="GO:0008270">
    <property type="term" value="F:zinc ion binding"/>
    <property type="evidence" value="ECO:0007669"/>
    <property type="project" value="UniProtKB-KW"/>
</dbReference>
<dbReference type="GO" id="GO:0006357">
    <property type="term" value="P:regulation of transcription by RNA polymerase II"/>
    <property type="evidence" value="ECO:0000318"/>
    <property type="project" value="GO_Central"/>
</dbReference>
<dbReference type="CDD" id="cd05501">
    <property type="entry name" value="Bromo_SP100C_like"/>
    <property type="match status" value="1"/>
</dbReference>
<dbReference type="CDD" id="cd15626">
    <property type="entry name" value="PHD_SP110_140"/>
    <property type="match status" value="1"/>
</dbReference>
<dbReference type="FunFam" id="1.20.920.10:FF:000028">
    <property type="entry name" value="Nuclear autoantigen Sp-100"/>
    <property type="match status" value="1"/>
</dbReference>
<dbReference type="FunFam" id="3.30.40.10:FF:000294">
    <property type="entry name" value="Nuclear autoantigen Sp-100"/>
    <property type="match status" value="1"/>
</dbReference>
<dbReference type="FunFam" id="3.10.390.10:FF:000005">
    <property type="entry name" value="SP140 nuclear body protein"/>
    <property type="match status" value="1"/>
</dbReference>
<dbReference type="Gene3D" id="1.20.920.10">
    <property type="entry name" value="Bromodomain-like"/>
    <property type="match status" value="1"/>
</dbReference>
<dbReference type="Gene3D" id="3.10.390.10">
    <property type="entry name" value="SAND domain-like"/>
    <property type="match status" value="1"/>
</dbReference>
<dbReference type="Gene3D" id="3.30.40.10">
    <property type="entry name" value="Zinc/RING finger domain, C3HC4 (zinc finger)"/>
    <property type="match status" value="1"/>
</dbReference>
<dbReference type="InterPro" id="IPR001487">
    <property type="entry name" value="Bromodomain"/>
</dbReference>
<dbReference type="InterPro" id="IPR036427">
    <property type="entry name" value="Bromodomain-like_sf"/>
</dbReference>
<dbReference type="InterPro" id="IPR004865">
    <property type="entry name" value="HSR_dom"/>
</dbReference>
<dbReference type="InterPro" id="IPR010919">
    <property type="entry name" value="SAND-like_dom_sf"/>
</dbReference>
<dbReference type="InterPro" id="IPR000770">
    <property type="entry name" value="SAND_dom"/>
</dbReference>
<dbReference type="InterPro" id="IPR043563">
    <property type="entry name" value="Sp110/Sp140/Sp140L-like"/>
</dbReference>
<dbReference type="InterPro" id="IPR030411">
    <property type="entry name" value="Sp140_Bromo"/>
</dbReference>
<dbReference type="InterPro" id="IPR019786">
    <property type="entry name" value="Zinc_finger_PHD-type_CS"/>
</dbReference>
<dbReference type="InterPro" id="IPR011011">
    <property type="entry name" value="Znf_FYVE_PHD"/>
</dbReference>
<dbReference type="InterPro" id="IPR001965">
    <property type="entry name" value="Znf_PHD"/>
</dbReference>
<dbReference type="InterPro" id="IPR019787">
    <property type="entry name" value="Znf_PHD-finger"/>
</dbReference>
<dbReference type="InterPro" id="IPR013083">
    <property type="entry name" value="Znf_RING/FYVE/PHD"/>
</dbReference>
<dbReference type="PANTHER" id="PTHR46386">
    <property type="entry name" value="NUCLEAR BODY PROTEIN SP140"/>
    <property type="match status" value="1"/>
</dbReference>
<dbReference type="PANTHER" id="PTHR46386:SF1">
    <property type="entry name" value="NUCLEAR BODY PROTEIN SP140-LIKE PROTEIN"/>
    <property type="match status" value="1"/>
</dbReference>
<dbReference type="Pfam" id="PF00439">
    <property type="entry name" value="Bromodomain"/>
    <property type="match status" value="1"/>
</dbReference>
<dbReference type="Pfam" id="PF03172">
    <property type="entry name" value="HSR"/>
    <property type="match status" value="1"/>
</dbReference>
<dbReference type="Pfam" id="PF00628">
    <property type="entry name" value="PHD"/>
    <property type="match status" value="1"/>
</dbReference>
<dbReference type="Pfam" id="PF01342">
    <property type="entry name" value="SAND"/>
    <property type="match status" value="1"/>
</dbReference>
<dbReference type="SMART" id="SM00297">
    <property type="entry name" value="BROMO"/>
    <property type="match status" value="1"/>
</dbReference>
<dbReference type="SMART" id="SM00249">
    <property type="entry name" value="PHD"/>
    <property type="match status" value="1"/>
</dbReference>
<dbReference type="SMART" id="SM00258">
    <property type="entry name" value="SAND"/>
    <property type="match status" value="1"/>
</dbReference>
<dbReference type="SUPFAM" id="SSF47370">
    <property type="entry name" value="Bromodomain"/>
    <property type="match status" value="1"/>
</dbReference>
<dbReference type="SUPFAM" id="SSF57903">
    <property type="entry name" value="FYVE/PHD zinc finger"/>
    <property type="match status" value="1"/>
</dbReference>
<dbReference type="SUPFAM" id="SSF63763">
    <property type="entry name" value="SAND domain-like"/>
    <property type="match status" value="1"/>
</dbReference>
<dbReference type="PROSITE" id="PS50014">
    <property type="entry name" value="BROMODOMAIN_2"/>
    <property type="match status" value="1"/>
</dbReference>
<dbReference type="PROSITE" id="PS51414">
    <property type="entry name" value="HSR"/>
    <property type="match status" value="1"/>
</dbReference>
<dbReference type="PROSITE" id="PS50864">
    <property type="entry name" value="SAND"/>
    <property type="match status" value="1"/>
</dbReference>
<dbReference type="PROSITE" id="PS01359">
    <property type="entry name" value="ZF_PHD_1"/>
    <property type="match status" value="1"/>
</dbReference>
<dbReference type="PROSITE" id="PS50016">
    <property type="entry name" value="ZF_PHD_2"/>
    <property type="match status" value="1"/>
</dbReference>
<name>SP14L_HUMAN</name>
<feature type="chain" id="PRO_0000321936" description="Nuclear body protein SP140-like protein">
    <location>
        <begin position="1"/>
        <end position="580"/>
    </location>
</feature>
<feature type="domain" description="HSR" evidence="4">
    <location>
        <begin position="33"/>
        <end position="149"/>
    </location>
</feature>
<feature type="domain" description="SAND" evidence="3">
    <location>
        <begin position="293"/>
        <end position="374"/>
    </location>
</feature>
<feature type="domain" description="Bromo" evidence="1">
    <location>
        <begin position="467"/>
        <end position="570"/>
    </location>
</feature>
<feature type="zinc finger region" description="PHD-type" evidence="2">
    <location>
        <begin position="403"/>
        <end position="449"/>
    </location>
</feature>
<feature type="region of interest" description="Disordered" evidence="5">
    <location>
        <begin position="155"/>
        <end position="293"/>
    </location>
</feature>
<feature type="compositionally biased region" description="Basic and acidic residues" evidence="5">
    <location>
        <begin position="156"/>
        <end position="170"/>
    </location>
</feature>
<feature type="compositionally biased region" description="Basic residues" evidence="5">
    <location>
        <begin position="207"/>
        <end position="219"/>
    </location>
</feature>
<feature type="compositionally biased region" description="Polar residues" evidence="5">
    <location>
        <begin position="224"/>
        <end position="236"/>
    </location>
</feature>
<feature type="compositionally biased region" description="Basic residues" evidence="5">
    <location>
        <begin position="280"/>
        <end position="290"/>
    </location>
</feature>
<feature type="modified residue" description="Phosphoserine" evidence="9">
    <location>
        <position position="180"/>
    </location>
</feature>
<feature type="cross-link" description="Glycyl lysine isopeptide (Lys-Gly) (interchain with G-Cter in SUMO2)" evidence="10">
    <location>
        <position position="169"/>
    </location>
</feature>
<feature type="cross-link" description="Glycyl lysine isopeptide (Lys-Gly) (interchain with G-Cter in SUMO2)" evidence="10">
    <location>
        <position position="292"/>
    </location>
</feature>
<feature type="splice variant" id="VSP_031830" description="In isoform 3." evidence="7">
    <location>
        <begin position="1"/>
        <end position="87"/>
    </location>
</feature>
<feature type="splice variant" id="VSP_031831" description="In isoform 3." evidence="7">
    <original>RKKK</original>
    <variation>SKNK</variation>
    <location>
        <begin position="213"/>
        <end position="216"/>
    </location>
</feature>
<feature type="splice variant" id="VSP_031832" description="In isoform 3." evidence="7">
    <location>
        <begin position="217"/>
        <end position="580"/>
    </location>
</feature>
<feature type="splice variant" id="VSP_031833" description="In isoform 2." evidence="7">
    <location>
        <begin position="287"/>
        <end position="321"/>
    </location>
</feature>
<feature type="splice variant" id="VSP_040889" description="In isoform 1." evidence="6">
    <original>HIPPVESEKTPWNCIFCRMKESPGSQQCCQESEVLERQMCPEEQLKCEFLLLKVYCCSESSFFAKIPYYYYIREACQGLKEPMWLDKIKKRLNEHGYPQVEGFVQDMRLIFQNHRASYKYKDFGQMGLRLEAEFEKDFKEVFAIQETNGNS</original>
    <variation>HIPPVESEK</variation>
    <location>
        <begin position="430"/>
        <end position="580"/>
    </location>
</feature>
<feature type="sequence variant" id="VAR_059144" description="In dbSNP:rs4973318.">
    <original>M</original>
    <variation>T</variation>
    <location>
        <position position="88"/>
    </location>
</feature>
<feature type="sequence variant" id="VAR_059145" description="In dbSNP:rs28497362.">
    <original>T</original>
    <variation>M</variation>
    <location>
        <position position="225"/>
    </location>
</feature>
<feature type="sequence variant" id="VAR_059146" description="In dbSNP:rs7590429.">
    <original>P</original>
    <variation>S</variation>
    <location>
        <position position="377"/>
    </location>
</feature>
<feature type="sequence conflict" description="In Ref. 3; BAB14413." evidence="8" ref="3">
    <original>M</original>
    <variation>T</variation>
    <location>
        <position position="223"/>
    </location>
</feature>